<sequence length="239" mass="26653">MAEWIYQYPPLLAGTLLQRYKRFFADIELESGEVITAHCPNTGPMTGISTPGSRVQVSRSNNPNRKLAYTWEMIQVEDTEPTWVGVNTGLPNQVTKLVLAAHLIPELGDYDQIRFEVPYGSEKSRVDFLLTGSDRPPTYVEVKSTTWTKGQLALFPDTVTTRGQKHIRELMALLPAHQAVMLYFINRGDCHQFAPGESADPVYAQLLRTAVAAGLQVLPCRFEITPEGICYLGLADLVL</sequence>
<gene>
    <name evidence="1" type="primary">sfsA</name>
    <name type="ordered locus">Cyan7425_2312</name>
</gene>
<evidence type="ECO:0000255" key="1">
    <source>
        <dbReference type="HAMAP-Rule" id="MF_00095"/>
    </source>
</evidence>
<name>SFSA_CYAP4</name>
<proteinExistence type="inferred from homology"/>
<comment type="similarity">
    <text evidence="1">Belongs to the SfsA family.</text>
</comment>
<feature type="chain" id="PRO_1000196967" description="Sugar fermentation stimulation protein homolog">
    <location>
        <begin position="1"/>
        <end position="239"/>
    </location>
</feature>
<protein>
    <recommendedName>
        <fullName evidence="1">Sugar fermentation stimulation protein homolog</fullName>
    </recommendedName>
</protein>
<organism>
    <name type="scientific">Cyanothece sp. (strain PCC 7425 / ATCC 29141)</name>
    <dbReference type="NCBI Taxonomy" id="395961"/>
    <lineage>
        <taxon>Bacteria</taxon>
        <taxon>Bacillati</taxon>
        <taxon>Cyanobacteriota</taxon>
        <taxon>Cyanophyceae</taxon>
        <taxon>Gomontiellales</taxon>
        <taxon>Cyanothecaceae</taxon>
        <taxon>Cyanothece</taxon>
    </lineage>
</organism>
<dbReference type="EMBL" id="CP001344">
    <property type="protein sequence ID" value="ACL44670.1"/>
    <property type="molecule type" value="Genomic_DNA"/>
</dbReference>
<dbReference type="SMR" id="B8HW91"/>
<dbReference type="STRING" id="395961.Cyan7425_2312"/>
<dbReference type="KEGG" id="cyn:Cyan7425_2312"/>
<dbReference type="eggNOG" id="COG1489">
    <property type="taxonomic scope" value="Bacteria"/>
</dbReference>
<dbReference type="HOGENOM" id="CLU_052299_2_0_3"/>
<dbReference type="OrthoDB" id="9802365at2"/>
<dbReference type="GO" id="GO:0003677">
    <property type="term" value="F:DNA binding"/>
    <property type="evidence" value="ECO:0007669"/>
    <property type="project" value="InterPro"/>
</dbReference>
<dbReference type="CDD" id="cd22359">
    <property type="entry name" value="SfsA-like_bacterial"/>
    <property type="match status" value="1"/>
</dbReference>
<dbReference type="FunFam" id="2.40.50.580:FF:000001">
    <property type="entry name" value="Sugar fermentation stimulation protein A"/>
    <property type="match status" value="1"/>
</dbReference>
<dbReference type="Gene3D" id="2.40.50.580">
    <property type="match status" value="1"/>
</dbReference>
<dbReference type="Gene3D" id="3.40.1350.60">
    <property type="match status" value="1"/>
</dbReference>
<dbReference type="HAMAP" id="MF_00095">
    <property type="entry name" value="SfsA"/>
    <property type="match status" value="1"/>
</dbReference>
<dbReference type="InterPro" id="IPR005224">
    <property type="entry name" value="SfsA"/>
</dbReference>
<dbReference type="InterPro" id="IPR040452">
    <property type="entry name" value="SfsA_C"/>
</dbReference>
<dbReference type="InterPro" id="IPR041465">
    <property type="entry name" value="SfsA_N"/>
</dbReference>
<dbReference type="NCBIfam" id="TIGR00230">
    <property type="entry name" value="sfsA"/>
    <property type="match status" value="1"/>
</dbReference>
<dbReference type="PANTHER" id="PTHR30545">
    <property type="entry name" value="SUGAR FERMENTATION STIMULATION PROTEIN A"/>
    <property type="match status" value="1"/>
</dbReference>
<dbReference type="PANTHER" id="PTHR30545:SF2">
    <property type="entry name" value="SUGAR FERMENTATION STIMULATION PROTEIN A"/>
    <property type="match status" value="1"/>
</dbReference>
<dbReference type="Pfam" id="PF03749">
    <property type="entry name" value="SfsA"/>
    <property type="match status" value="1"/>
</dbReference>
<dbReference type="Pfam" id="PF17746">
    <property type="entry name" value="SfsA_N"/>
    <property type="match status" value="1"/>
</dbReference>
<reference key="1">
    <citation type="journal article" date="2011" name="MBio">
        <title>Novel metabolic attributes of the genus Cyanothece, comprising a group of unicellular nitrogen-fixing Cyanobacteria.</title>
        <authorList>
            <person name="Bandyopadhyay A."/>
            <person name="Elvitigala T."/>
            <person name="Welsh E."/>
            <person name="Stockel J."/>
            <person name="Liberton M."/>
            <person name="Min H."/>
            <person name="Sherman L.A."/>
            <person name="Pakrasi H.B."/>
        </authorList>
    </citation>
    <scope>NUCLEOTIDE SEQUENCE [LARGE SCALE GENOMIC DNA]</scope>
    <source>
        <strain>PCC 7425 / ATCC 29141</strain>
    </source>
</reference>
<accession>B8HW91</accession>